<dbReference type="EMBL" id="AF269249">
    <property type="protein sequence ID" value="AAF88036.1"/>
    <property type="molecule type" value="mRNA"/>
</dbReference>
<dbReference type="EMBL" id="AC007228">
    <property type="protein sequence ID" value="AAD23608.1"/>
    <property type="status" value="ALT_INIT"/>
    <property type="molecule type" value="Genomic_DNA"/>
</dbReference>
<dbReference type="EMBL" id="BC014280">
    <property type="protein sequence ID" value="AAH14280.1"/>
    <property type="molecule type" value="mRNA"/>
</dbReference>
<dbReference type="EMBL" id="X60074">
    <property type="protein sequence ID" value="CAC16174.1"/>
    <property type="molecule type" value="Genomic_DNA"/>
</dbReference>
<dbReference type="EMBL" id="M88357">
    <property type="protein sequence ID" value="AAA61315.1"/>
    <property type="molecule type" value="Genomic_DNA"/>
</dbReference>
<dbReference type="CCDS" id="CCDS12947.1"/>
<dbReference type="PIR" id="A42825">
    <property type="entry name" value="A42825"/>
</dbReference>
<dbReference type="PIR" id="A43284">
    <property type="entry name" value="A43284"/>
</dbReference>
<dbReference type="RefSeq" id="NP_001357143.1">
    <property type="nucleotide sequence ID" value="NM_001370214.1"/>
</dbReference>
<dbReference type="RefSeq" id="NP_067039.1">
    <property type="nucleotide sequence ID" value="NM_021216.5"/>
</dbReference>
<dbReference type="RefSeq" id="XP_016882569.1">
    <property type="nucleotide sequence ID" value="XM_017027080.1"/>
</dbReference>
<dbReference type="SMR" id="Q9NQZ8"/>
<dbReference type="BioGRID" id="121821">
    <property type="interactions" value="83"/>
</dbReference>
<dbReference type="FunCoup" id="Q9NQZ8">
    <property type="interactions" value="647"/>
</dbReference>
<dbReference type="IntAct" id="Q9NQZ8">
    <property type="interactions" value="76"/>
</dbReference>
<dbReference type="MINT" id="Q9NQZ8"/>
<dbReference type="STRING" id="9606.ENSP00000328245"/>
<dbReference type="iPTMnet" id="Q9NQZ8"/>
<dbReference type="PhosphoSitePlus" id="Q9NQZ8"/>
<dbReference type="BioMuta" id="ZNF71"/>
<dbReference type="DMDM" id="21263627"/>
<dbReference type="jPOST" id="Q9NQZ8"/>
<dbReference type="MassIVE" id="Q9NQZ8"/>
<dbReference type="PaxDb" id="9606-ENSP00000328245"/>
<dbReference type="PeptideAtlas" id="Q9NQZ8"/>
<dbReference type="ProteomicsDB" id="82239"/>
<dbReference type="Antibodypedia" id="19623">
    <property type="antibodies" value="161 antibodies from 28 providers"/>
</dbReference>
<dbReference type="DNASU" id="58491"/>
<dbReference type="Ensembl" id="ENST00000328070.10">
    <property type="protein sequence ID" value="ENSP00000328245.5"/>
    <property type="gene ID" value="ENSG00000197951.11"/>
</dbReference>
<dbReference type="Ensembl" id="ENST00000716547.1">
    <property type="protein sequence ID" value="ENSP00000520559.1"/>
    <property type="gene ID" value="ENSG00000197951.11"/>
</dbReference>
<dbReference type="GeneID" id="58491"/>
<dbReference type="KEGG" id="hsa:58491"/>
<dbReference type="UCSC" id="uc002qnm.5">
    <property type="organism name" value="human"/>
</dbReference>
<dbReference type="AGR" id="HGNC:13141"/>
<dbReference type="CTD" id="58491"/>
<dbReference type="DisGeNET" id="58491"/>
<dbReference type="GeneCards" id="ZNF71"/>
<dbReference type="HGNC" id="HGNC:13141">
    <property type="gene designation" value="ZNF71"/>
</dbReference>
<dbReference type="HPA" id="ENSG00000197951">
    <property type="expression patterns" value="Low tissue specificity"/>
</dbReference>
<dbReference type="MIM" id="194545">
    <property type="type" value="gene"/>
</dbReference>
<dbReference type="neXtProt" id="NX_Q9NQZ8"/>
<dbReference type="OpenTargets" id="ENSG00000197951"/>
<dbReference type="PharmGKB" id="PA37715"/>
<dbReference type="VEuPathDB" id="HostDB:ENSG00000197951"/>
<dbReference type="eggNOG" id="KOG1721">
    <property type="taxonomic scope" value="Eukaryota"/>
</dbReference>
<dbReference type="GeneTree" id="ENSGT00940000163774"/>
<dbReference type="HOGENOM" id="CLU_002678_44_0_1"/>
<dbReference type="InParanoid" id="Q9NQZ8"/>
<dbReference type="OMA" id="HEECKAL"/>
<dbReference type="OrthoDB" id="9411774at2759"/>
<dbReference type="PAN-GO" id="Q9NQZ8">
    <property type="GO annotations" value="4 GO annotations based on evolutionary models"/>
</dbReference>
<dbReference type="PhylomeDB" id="Q9NQZ8"/>
<dbReference type="TreeFam" id="TF350858"/>
<dbReference type="PathwayCommons" id="Q9NQZ8"/>
<dbReference type="Reactome" id="R-HSA-212436">
    <property type="pathway name" value="Generic Transcription Pathway"/>
</dbReference>
<dbReference type="SignaLink" id="Q9NQZ8"/>
<dbReference type="BioGRID-ORCS" id="58491">
    <property type="hits" value="14 hits in 1176 CRISPR screens"/>
</dbReference>
<dbReference type="ChiTaRS" id="ZNF71">
    <property type="organism name" value="human"/>
</dbReference>
<dbReference type="GeneWiki" id="ZNF71"/>
<dbReference type="GenomeRNAi" id="58491"/>
<dbReference type="Pharos" id="Q9NQZ8">
    <property type="development level" value="Tbio"/>
</dbReference>
<dbReference type="PRO" id="PR:Q9NQZ8"/>
<dbReference type="Proteomes" id="UP000005640">
    <property type="component" value="Chromosome 19"/>
</dbReference>
<dbReference type="RNAct" id="Q9NQZ8">
    <property type="molecule type" value="protein"/>
</dbReference>
<dbReference type="Bgee" id="ENSG00000197951">
    <property type="expression patterns" value="Expressed in primordial germ cell in gonad and 118 other cell types or tissues"/>
</dbReference>
<dbReference type="ExpressionAtlas" id="Q9NQZ8">
    <property type="expression patterns" value="baseline and differential"/>
</dbReference>
<dbReference type="GO" id="GO:0005634">
    <property type="term" value="C:nucleus"/>
    <property type="evidence" value="ECO:0000318"/>
    <property type="project" value="GO_Central"/>
</dbReference>
<dbReference type="GO" id="GO:0001228">
    <property type="term" value="F:DNA-binding transcription activator activity, RNA polymerase II-specific"/>
    <property type="evidence" value="ECO:0000318"/>
    <property type="project" value="GO_Central"/>
</dbReference>
<dbReference type="GO" id="GO:0000978">
    <property type="term" value="F:RNA polymerase II cis-regulatory region sequence-specific DNA binding"/>
    <property type="evidence" value="ECO:0000318"/>
    <property type="project" value="GO_Central"/>
</dbReference>
<dbReference type="GO" id="GO:0008270">
    <property type="term" value="F:zinc ion binding"/>
    <property type="evidence" value="ECO:0007669"/>
    <property type="project" value="UniProtKB-KW"/>
</dbReference>
<dbReference type="GO" id="GO:0006357">
    <property type="term" value="P:regulation of transcription by RNA polymerase II"/>
    <property type="evidence" value="ECO:0000318"/>
    <property type="project" value="GO_Central"/>
</dbReference>
<dbReference type="FunFam" id="3.30.160.60:FF:002898">
    <property type="entry name" value="endothelial zinc finger protein induced by tumor necrosis factor alpha"/>
    <property type="match status" value="1"/>
</dbReference>
<dbReference type="FunFam" id="3.30.160.60:FF:002063">
    <property type="entry name" value="RB associated KRAB zinc finger"/>
    <property type="match status" value="1"/>
</dbReference>
<dbReference type="FunFam" id="3.30.160.60:FF:000478">
    <property type="entry name" value="Zinc finger protein 133"/>
    <property type="match status" value="1"/>
</dbReference>
<dbReference type="FunFam" id="3.30.160.60:FF:000631">
    <property type="entry name" value="zinc finger protein 189 isoform X2"/>
    <property type="match status" value="1"/>
</dbReference>
<dbReference type="FunFam" id="3.30.160.60:FF:000705">
    <property type="entry name" value="zinc finger protein 2 homolog"/>
    <property type="match status" value="1"/>
</dbReference>
<dbReference type="FunFam" id="3.30.160.60:FF:000999">
    <property type="entry name" value="zinc finger protein 2 homolog"/>
    <property type="match status" value="1"/>
</dbReference>
<dbReference type="FunFam" id="3.30.160.60:FF:000822">
    <property type="entry name" value="Zinc finger protein 234, isoform CRA_a"/>
    <property type="match status" value="1"/>
</dbReference>
<dbReference type="FunFam" id="3.30.160.60:FF:000027">
    <property type="entry name" value="zinc finger protein 3 homolog"/>
    <property type="match status" value="1"/>
</dbReference>
<dbReference type="FunFam" id="3.30.160.60:FF:002343">
    <property type="entry name" value="Zinc finger protein 33A"/>
    <property type="match status" value="3"/>
</dbReference>
<dbReference type="FunFam" id="3.30.160.60:FF:001498">
    <property type="entry name" value="Zinc finger protein 404"/>
    <property type="match status" value="1"/>
</dbReference>
<dbReference type="FunFam" id="3.30.160.60:FF:000200">
    <property type="entry name" value="zinc finger protein 510 isoform X2"/>
    <property type="match status" value="1"/>
</dbReference>
<dbReference type="Gene3D" id="3.30.160.60">
    <property type="entry name" value="Classic Zinc Finger"/>
    <property type="match status" value="13"/>
</dbReference>
<dbReference type="InterPro" id="IPR050752">
    <property type="entry name" value="C2H2-ZF_domain"/>
</dbReference>
<dbReference type="InterPro" id="IPR036236">
    <property type="entry name" value="Znf_C2H2_sf"/>
</dbReference>
<dbReference type="InterPro" id="IPR013087">
    <property type="entry name" value="Znf_C2H2_type"/>
</dbReference>
<dbReference type="PANTHER" id="PTHR24384">
    <property type="entry name" value="FINGER PUTATIVE TRANSCRIPTION FACTOR FAMILY-RELATED"/>
    <property type="match status" value="1"/>
</dbReference>
<dbReference type="PANTHER" id="PTHR24384:SF246">
    <property type="entry name" value="GENE, 19965-RELATED"/>
    <property type="match status" value="1"/>
</dbReference>
<dbReference type="Pfam" id="PF00096">
    <property type="entry name" value="zf-C2H2"/>
    <property type="match status" value="13"/>
</dbReference>
<dbReference type="SMART" id="SM00355">
    <property type="entry name" value="ZnF_C2H2"/>
    <property type="match status" value="13"/>
</dbReference>
<dbReference type="SUPFAM" id="SSF57667">
    <property type="entry name" value="beta-beta-alpha zinc fingers"/>
    <property type="match status" value="7"/>
</dbReference>
<dbReference type="PROSITE" id="PS00028">
    <property type="entry name" value="ZINC_FINGER_C2H2_1"/>
    <property type="match status" value="13"/>
</dbReference>
<dbReference type="PROSITE" id="PS50157">
    <property type="entry name" value="ZINC_FINGER_C2H2_2"/>
    <property type="match status" value="13"/>
</dbReference>
<keyword id="KW-0238">DNA-binding</keyword>
<keyword id="KW-0479">Metal-binding</keyword>
<keyword id="KW-0539">Nucleus</keyword>
<keyword id="KW-1267">Proteomics identification</keyword>
<keyword id="KW-1185">Reference proteome</keyword>
<keyword id="KW-0677">Repeat</keyword>
<keyword id="KW-0804">Transcription</keyword>
<keyword id="KW-0805">Transcription regulation</keyword>
<keyword id="KW-0862">Zinc</keyword>
<keyword id="KW-0863">Zinc-finger</keyword>
<gene>
    <name type="primary">ZNF71</name>
    <name type="synonym">EZFIT</name>
</gene>
<sequence>MKELDPKNDISEDKLSVVGEATGGPTRNGARGPGSEGVWEPGSWPERPRGDAGAEWEPLGIPQGNKLLGGSVPACHELKAFANQGCVLVPPRLDDPTEKGACPPVRRGKNFSSTSDLSKPPMPCEEKKTYDCSECGKAFSRSSSLIKHQRIHTGEKPFECDTCGKHFIERSSLTIHQRVHTGEKPYACGDCGKAFSQRMNLTVHQRTHTGEKPYVCDVCGKAFRKTSSLTQHERIHTGEKPYACGDCGKAFSQNMHLIVHQRTHTGEKPYVCPECGRAFSQNMHLTEHQRTHTGEKPYACKECGKAFNKSSSLTLHQRNHTGEKPYVCGECGKAFSQSSYLIQHQRFHIGVKPFECSECGKAFSKNSSLTQHQRIHTGEKPYECYICKKHFTGRSSLIVHQIVHTGEKPYVCGECGKAFSQSAYLIEHQRIHTGEKPYRCGQCGKSFIKNSSLTVHQRIHTGEKPYRCGECGKTFSRNTNLTRHLRIHT</sequence>
<organism>
    <name type="scientific">Homo sapiens</name>
    <name type="common">Human</name>
    <dbReference type="NCBI Taxonomy" id="9606"/>
    <lineage>
        <taxon>Eukaryota</taxon>
        <taxon>Metazoa</taxon>
        <taxon>Chordata</taxon>
        <taxon>Craniata</taxon>
        <taxon>Vertebrata</taxon>
        <taxon>Euteleostomi</taxon>
        <taxon>Mammalia</taxon>
        <taxon>Eutheria</taxon>
        <taxon>Euarchontoglires</taxon>
        <taxon>Primates</taxon>
        <taxon>Haplorrhini</taxon>
        <taxon>Catarrhini</taxon>
        <taxon>Hominidae</taxon>
        <taxon>Homo</taxon>
    </lineage>
</organism>
<name>ZNF71_HUMAN</name>
<evidence type="ECO:0000255" key="1">
    <source>
        <dbReference type="PROSITE-ProRule" id="PRU00042"/>
    </source>
</evidence>
<evidence type="ECO:0000256" key="2">
    <source>
        <dbReference type="SAM" id="MobiDB-lite"/>
    </source>
</evidence>
<evidence type="ECO:0000305" key="3"/>
<accession>Q9NQZ8</accession>
<accession>Q15919</accession>
<accession>Q9UC09</accession>
<accession>Q9UQD3</accession>
<comment type="function">
    <text>May be involved in transcriptional regulation.</text>
</comment>
<comment type="interaction">
    <interactant intactId="EBI-7138235">
        <id>Q9NQZ8</id>
    </interactant>
    <interactant intactId="EBI-358049">
        <id>Q13895</id>
        <label>BYSL</label>
    </interactant>
    <organismsDiffer>false</organismsDiffer>
    <experiments>3</experiments>
</comment>
<comment type="interaction">
    <interactant intactId="EBI-7138235">
        <id>Q9NQZ8</id>
    </interactant>
    <interactant intactId="EBI-739789">
        <id>Q92997</id>
        <label>DVL3</label>
    </interactant>
    <organismsDiffer>false</organismsDiffer>
    <experiments>3</experiments>
</comment>
<comment type="interaction">
    <interactant intactId="EBI-7138235">
        <id>Q9NQZ8</id>
    </interactant>
    <interactant intactId="EBI-11022345">
        <id>P51114-2</id>
        <label>FXR1</label>
    </interactant>
    <organismsDiffer>false</organismsDiffer>
    <experiments>3</experiments>
</comment>
<comment type="interaction">
    <interactant intactId="EBI-7138235">
        <id>Q9NQZ8</id>
    </interactant>
    <interactant intactId="EBI-10274069">
        <id>Q8TCE9</id>
        <label>LGALS14</label>
    </interactant>
    <organismsDiffer>false</organismsDiffer>
    <experiments>3</experiments>
</comment>
<comment type="interaction">
    <interactant intactId="EBI-7138235">
        <id>Q9NQZ8</id>
    </interactant>
    <interactant intactId="EBI-10255081">
        <id>Q9NYL2-2</id>
        <label>MAP3K20</label>
    </interactant>
    <organismsDiffer>false</organismsDiffer>
    <experiments>4</experiments>
</comment>
<comment type="interaction">
    <interactant intactId="EBI-7138235">
        <id>Q9NQZ8</id>
    </interactant>
    <interactant intactId="EBI-1048159">
        <id>P55081</id>
        <label>MFAP1</label>
    </interactant>
    <organismsDiffer>false</organismsDiffer>
    <experiments>3</experiments>
</comment>
<comment type="interaction">
    <interactant intactId="EBI-7138235">
        <id>Q9NQZ8</id>
    </interactant>
    <interactant intactId="EBI-1045534">
        <id>O00264</id>
        <label>PGRMC1</label>
    </interactant>
    <organismsDiffer>false</organismsDiffer>
    <experiments>5</experiments>
</comment>
<comment type="interaction">
    <interactant intactId="EBI-7138235">
        <id>Q9NQZ8</id>
    </interactant>
    <interactant intactId="EBI-530034">
        <id>O43189</id>
        <label>PHF1</label>
    </interactant>
    <organismsDiffer>false</organismsDiffer>
    <experiments>3</experiments>
</comment>
<comment type="interaction">
    <interactant intactId="EBI-7138235">
        <id>Q9NQZ8</id>
    </interactant>
    <interactant intactId="EBI-79165">
        <id>Q9NRD5</id>
        <label>PICK1</label>
    </interactant>
    <organismsDiffer>false</organismsDiffer>
    <experiments>3</experiments>
</comment>
<comment type="interaction">
    <interactant intactId="EBI-7138235">
        <id>Q9NQZ8</id>
    </interactant>
    <interactant intactId="EBI-1567797">
        <id>Q8WWY3</id>
        <label>PRPF31</label>
    </interactant>
    <organismsDiffer>false</organismsDiffer>
    <experiments>3</experiments>
</comment>
<comment type="interaction">
    <interactant intactId="EBI-7138235">
        <id>Q9NQZ8</id>
    </interactant>
    <interactant intactId="EBI-308619">
        <id>Q15020</id>
        <label>SART3</label>
    </interactant>
    <organismsDiffer>false</organismsDiffer>
    <experiments>3</experiments>
</comment>
<comment type="interaction">
    <interactant intactId="EBI-7138235">
        <id>Q9NQZ8</id>
    </interactant>
    <interactant intactId="EBI-725997">
        <id>Q8WV44</id>
        <label>TRIM41</label>
    </interactant>
    <organismsDiffer>false</organismsDiffer>
    <experiments>8</experiments>
</comment>
<comment type="interaction">
    <interactant intactId="EBI-7138235">
        <id>Q9NQZ8</id>
    </interactant>
    <interactant intactId="EBI-11097439">
        <id>P26368-2</id>
        <label>U2AF2</label>
    </interactant>
    <organismsDiffer>false</organismsDiffer>
    <experiments>3</experiments>
</comment>
<comment type="interaction">
    <interactant intactId="EBI-7138235">
        <id>Q9NQZ8</id>
    </interactant>
    <interactant intactId="EBI-744471">
        <id>O43167</id>
        <label>ZBTB24</label>
    </interactant>
    <organismsDiffer>false</organismsDiffer>
    <experiments>5</experiments>
</comment>
<comment type="interaction">
    <interactant intactId="EBI-7138235">
        <id>Q9NQZ8</id>
    </interactant>
    <interactant intactId="EBI-395708">
        <id>Q96C00</id>
        <label>ZBTB9</label>
    </interactant>
    <organismsDiffer>false</organismsDiffer>
    <experiments>3</experiments>
</comment>
<comment type="interaction">
    <interactant intactId="EBI-7138235">
        <id>Q9NQZ8</id>
    </interactant>
    <interactant intactId="EBI-10183064">
        <id>Q8N5A5-2</id>
        <label>ZGPAT</label>
    </interactant>
    <organismsDiffer>false</organismsDiffer>
    <experiments>3</experiments>
</comment>
<comment type="interaction">
    <interactant intactId="EBI-7138235">
        <id>Q9NQZ8</id>
    </interactant>
    <interactant intactId="EBI-740727">
        <id>Q8TAU3</id>
        <label>ZNF417</label>
    </interactant>
    <organismsDiffer>false</organismsDiffer>
    <experiments>3</experiments>
</comment>
<comment type="interaction">
    <interactant intactId="EBI-7138235">
        <id>Q9NQZ8</id>
    </interactant>
    <interactant intactId="EBI-10486136">
        <id>Q6ZNH5</id>
        <label>ZNF497</label>
    </interactant>
    <organismsDiffer>false</organismsDiffer>
    <experiments>5</experiments>
</comment>
<comment type="interaction">
    <interactant intactId="EBI-7138235">
        <id>Q9NQZ8</id>
    </interactant>
    <interactant intactId="EBI-10283126">
        <id>Q96C55</id>
        <label>ZNF524</label>
    </interactant>
    <organismsDiffer>false</organismsDiffer>
    <experiments>3</experiments>
</comment>
<comment type="interaction">
    <interactant intactId="EBI-7138235">
        <id>Q9NQZ8</id>
    </interactant>
    <interactant intactId="EBI-11985915">
        <id>Q5T619</id>
        <label>ZNF648</label>
    </interactant>
    <organismsDiffer>false</organismsDiffer>
    <experiments>3</experiments>
</comment>
<comment type="interaction">
    <interactant intactId="EBI-7138235">
        <id>Q9NQZ8</id>
    </interactant>
    <interactant intactId="EBI-10240849">
        <id>Q3KQV3</id>
        <label>ZNF792</label>
    </interactant>
    <organismsDiffer>false</organismsDiffer>
    <experiments>3</experiments>
</comment>
<comment type="interaction">
    <interactant intactId="EBI-7138235">
        <id>Q9NQZ8</id>
    </interactant>
    <interactant intactId="EBI-5667516">
        <id>Q9Y2P0</id>
        <label>ZNF835</label>
    </interactant>
    <organismsDiffer>false</organismsDiffer>
    <experiments>3</experiments>
</comment>
<comment type="subcellular location">
    <subcellularLocation>
        <location evidence="3">Nucleus</location>
    </subcellularLocation>
</comment>
<comment type="tissue specificity">
    <text>Highly expressed in placenta, followed by brain, testis, pancreas, heart, small intestine, muscle, uterus, prostate and peripheral blood leukocytes. Not detected in liver, lung, colon, stomach, salivary and thyroid gland.</text>
</comment>
<comment type="induction">
    <text>By TNF.</text>
</comment>
<comment type="similarity">
    <text evidence="3">Belongs to the krueppel C2H2-type zinc-finger protein family.</text>
</comment>
<comment type="sequence caution" evidence="3">
    <conflict type="erroneous initiation">
        <sequence resource="EMBL-CDS" id="AAD23608"/>
    </conflict>
</comment>
<feature type="chain" id="PRO_0000047381" description="Endothelial zinc finger protein induced by tumor necrosis factor alpha">
    <location>
        <begin position="1"/>
        <end position="489"/>
    </location>
</feature>
<feature type="zinc finger region" description="C2H2-type 1" evidence="1">
    <location>
        <begin position="130"/>
        <end position="152"/>
    </location>
</feature>
<feature type="zinc finger region" description="C2H2-type 2" evidence="1">
    <location>
        <begin position="158"/>
        <end position="180"/>
    </location>
</feature>
<feature type="zinc finger region" description="C2H2-type 3" evidence="1">
    <location>
        <begin position="186"/>
        <end position="208"/>
    </location>
</feature>
<feature type="zinc finger region" description="C2H2-type 4" evidence="1">
    <location>
        <begin position="214"/>
        <end position="236"/>
    </location>
</feature>
<feature type="zinc finger region" description="C2H2-type 5" evidence="1">
    <location>
        <begin position="242"/>
        <end position="264"/>
    </location>
</feature>
<feature type="zinc finger region" description="C2H2-type 6" evidence="1">
    <location>
        <begin position="270"/>
        <end position="292"/>
    </location>
</feature>
<feature type="zinc finger region" description="C2H2-type 7" evidence="1">
    <location>
        <begin position="298"/>
        <end position="320"/>
    </location>
</feature>
<feature type="zinc finger region" description="C2H2-type 8" evidence="1">
    <location>
        <begin position="326"/>
        <end position="348"/>
    </location>
</feature>
<feature type="zinc finger region" description="C2H2-type 9" evidence="1">
    <location>
        <begin position="354"/>
        <end position="376"/>
    </location>
</feature>
<feature type="zinc finger region" description="C2H2-type 10" evidence="1">
    <location>
        <begin position="382"/>
        <end position="404"/>
    </location>
</feature>
<feature type="zinc finger region" description="C2H2-type 11" evidence="1">
    <location>
        <begin position="410"/>
        <end position="432"/>
    </location>
</feature>
<feature type="zinc finger region" description="C2H2-type 12" evidence="1">
    <location>
        <begin position="438"/>
        <end position="460"/>
    </location>
</feature>
<feature type="zinc finger region" description="C2H2-type 13" evidence="1">
    <location>
        <begin position="466"/>
        <end position="488"/>
    </location>
</feature>
<feature type="region of interest" description="Disordered" evidence="2">
    <location>
        <begin position="1"/>
        <end position="61"/>
    </location>
</feature>
<feature type="region of interest" description="Disordered" evidence="2">
    <location>
        <begin position="98"/>
        <end position="122"/>
    </location>
</feature>
<feature type="compositionally biased region" description="Basic and acidic residues" evidence="2">
    <location>
        <begin position="1"/>
        <end position="15"/>
    </location>
</feature>
<feature type="sequence variant" id="VAR_052762" description="In dbSNP:rs10405299.">
    <original>R</original>
    <variation>G</variation>
    <location>
        <position position="27"/>
    </location>
</feature>
<feature type="sequence variant" id="VAR_024196" description="In dbSNP:rs2072501.">
    <original>V</original>
    <variation>I</variation>
    <location>
        <position position="105"/>
    </location>
</feature>
<feature type="sequence variant" id="VAR_052763" description="In dbSNP:rs35392779.">
    <original>P</original>
    <variation>L</variation>
    <location>
        <position position="121"/>
    </location>
</feature>
<reference key="1">
    <citation type="journal article" date="2000" name="J. Atheroscler. Thromb.">
        <title>A novel zinc finger protein mRNA in human umbilical vein endothelial cells is profoundly induced by tumor necrosis factor alpha.</title>
        <authorList>
            <person name="Mataki C."/>
            <person name="Murakami T."/>
            <person name="Umetani M."/>
            <person name="Wada Y."/>
            <person name="Ishii M."/>
            <person name="Tsutsumi S."/>
            <person name="Aburatani H."/>
            <person name="Hamakubo T."/>
            <person name="Kodama T."/>
        </authorList>
    </citation>
    <scope>NUCLEOTIDE SEQUENCE [MRNA]</scope>
    <source>
        <tissue>Umbilical vein endothelial cell</tissue>
    </source>
</reference>
<reference key="2">
    <citation type="journal article" date="2004" name="Nature">
        <title>The DNA sequence and biology of human chromosome 19.</title>
        <authorList>
            <person name="Grimwood J."/>
            <person name="Gordon L.A."/>
            <person name="Olsen A.S."/>
            <person name="Terry A."/>
            <person name="Schmutz J."/>
            <person name="Lamerdin J.E."/>
            <person name="Hellsten U."/>
            <person name="Goodstein D."/>
            <person name="Couronne O."/>
            <person name="Tran-Gyamfi M."/>
            <person name="Aerts A."/>
            <person name="Altherr M."/>
            <person name="Ashworth L."/>
            <person name="Bajorek E."/>
            <person name="Black S."/>
            <person name="Branscomb E."/>
            <person name="Caenepeel S."/>
            <person name="Carrano A.V."/>
            <person name="Caoile C."/>
            <person name="Chan Y.M."/>
            <person name="Christensen M."/>
            <person name="Cleland C.A."/>
            <person name="Copeland A."/>
            <person name="Dalin E."/>
            <person name="Dehal P."/>
            <person name="Denys M."/>
            <person name="Detter J.C."/>
            <person name="Escobar J."/>
            <person name="Flowers D."/>
            <person name="Fotopulos D."/>
            <person name="Garcia C."/>
            <person name="Georgescu A.M."/>
            <person name="Glavina T."/>
            <person name="Gomez M."/>
            <person name="Gonzales E."/>
            <person name="Groza M."/>
            <person name="Hammon N."/>
            <person name="Hawkins T."/>
            <person name="Haydu L."/>
            <person name="Ho I."/>
            <person name="Huang W."/>
            <person name="Israni S."/>
            <person name="Jett J."/>
            <person name="Kadner K."/>
            <person name="Kimball H."/>
            <person name="Kobayashi A."/>
            <person name="Larionov V."/>
            <person name="Leem S.-H."/>
            <person name="Lopez F."/>
            <person name="Lou Y."/>
            <person name="Lowry S."/>
            <person name="Malfatti S."/>
            <person name="Martinez D."/>
            <person name="McCready P.M."/>
            <person name="Medina C."/>
            <person name="Morgan J."/>
            <person name="Nelson K."/>
            <person name="Nolan M."/>
            <person name="Ovcharenko I."/>
            <person name="Pitluck S."/>
            <person name="Pollard M."/>
            <person name="Popkie A.P."/>
            <person name="Predki P."/>
            <person name="Quan G."/>
            <person name="Ramirez L."/>
            <person name="Rash S."/>
            <person name="Retterer J."/>
            <person name="Rodriguez A."/>
            <person name="Rogers S."/>
            <person name="Salamov A."/>
            <person name="Salazar A."/>
            <person name="She X."/>
            <person name="Smith D."/>
            <person name="Slezak T."/>
            <person name="Solovyev V."/>
            <person name="Thayer N."/>
            <person name="Tice H."/>
            <person name="Tsai M."/>
            <person name="Ustaszewska A."/>
            <person name="Vo N."/>
            <person name="Wagner M."/>
            <person name="Wheeler J."/>
            <person name="Wu K."/>
            <person name="Xie G."/>
            <person name="Yang J."/>
            <person name="Dubchak I."/>
            <person name="Furey T.S."/>
            <person name="DeJong P."/>
            <person name="Dickson M."/>
            <person name="Gordon D."/>
            <person name="Eichler E.E."/>
            <person name="Pennacchio L.A."/>
            <person name="Richardson P."/>
            <person name="Stubbs L."/>
            <person name="Rokhsar D.S."/>
            <person name="Myers R.M."/>
            <person name="Rubin E.M."/>
            <person name="Lucas S.M."/>
        </authorList>
    </citation>
    <scope>NUCLEOTIDE SEQUENCE [LARGE SCALE GENOMIC DNA]</scope>
</reference>
<reference key="3">
    <citation type="journal article" date="2004" name="Genome Res.">
        <title>The status, quality, and expansion of the NIH full-length cDNA project: the Mammalian Gene Collection (MGC).</title>
        <authorList>
            <consortium name="The MGC Project Team"/>
        </authorList>
    </citation>
    <scope>NUCLEOTIDE SEQUENCE [LARGE SCALE MRNA]</scope>
    <source>
        <tissue>Placenta</tissue>
    </source>
</reference>
<reference key="4">
    <citation type="journal article" date="1992" name="Genomics">
        <title>Cloning of six new genes with zinc finger motifs mapping to short and long arms of human acrocentric chromosome 22 (p and q11.2).</title>
        <authorList>
            <person name="Aubry M."/>
            <person name="Marineau C."/>
            <person name="Zhang F.R."/>
            <person name="Zahed L."/>
            <person name="Figlewicz D."/>
            <person name="Delattre O."/>
            <person name="Thomas G."/>
            <person name="de Jong P.J."/>
            <person name="Julien J.-P."/>
            <person name="Rouleau G.A."/>
        </authorList>
    </citation>
    <scope>NUCLEOTIDE SEQUENCE [GENOMIC DNA] OF 151-235</scope>
</reference>
<reference key="5">
    <citation type="journal article" date="1992" name="Genomics">
        <title>Clustering of C2-H2 zinc finger motif sequences within telomeric and fragile site regions of human chromosomes.</title>
        <authorList>
            <person name="Lichter P."/>
            <person name="Bray P."/>
            <person name="Ried T."/>
            <person name="Dawid I.B."/>
            <person name="Ward D.C."/>
        </authorList>
    </citation>
    <scope>NUCLEOTIDE SEQUENCE [GENOMIC DNA] OF 431-489</scope>
    <source>
        <tissue>Placenta</tissue>
    </source>
</reference>
<proteinExistence type="evidence at protein level"/>
<protein>
    <recommendedName>
        <fullName>Endothelial zinc finger protein induced by tumor necrosis factor alpha</fullName>
    </recommendedName>
    <alternativeName>
        <fullName>Zinc finger protein 71</fullName>
    </alternativeName>
</protein>